<accession>A3PEU8</accession>
<name>CCS1_PROM0</name>
<organism>
    <name type="scientific">Prochlorococcus marinus (strain MIT 9301)</name>
    <dbReference type="NCBI Taxonomy" id="167546"/>
    <lineage>
        <taxon>Bacteria</taxon>
        <taxon>Bacillati</taxon>
        <taxon>Cyanobacteriota</taxon>
        <taxon>Cyanophyceae</taxon>
        <taxon>Synechococcales</taxon>
        <taxon>Prochlorococcaceae</taxon>
        <taxon>Prochlorococcus</taxon>
    </lineage>
</organism>
<feature type="chain" id="PRO_0000363620" description="Cytochrome c biogenesis protein CcsB">
    <location>
        <begin position="1"/>
        <end position="428"/>
    </location>
</feature>
<feature type="transmembrane region" description="Helical" evidence="1">
    <location>
        <begin position="14"/>
        <end position="34"/>
    </location>
</feature>
<feature type="transmembrane region" description="Helical" evidence="1">
    <location>
        <begin position="72"/>
        <end position="92"/>
    </location>
</feature>
<feature type="transmembrane region" description="Helical" evidence="1">
    <location>
        <begin position="162"/>
        <end position="182"/>
    </location>
</feature>
<dbReference type="EMBL" id="CP000576">
    <property type="protein sequence ID" value="ABO18273.1"/>
    <property type="molecule type" value="Genomic_DNA"/>
</dbReference>
<dbReference type="RefSeq" id="WP_011863571.1">
    <property type="nucleotide sequence ID" value="NC_009091.1"/>
</dbReference>
<dbReference type="SMR" id="A3PEU8"/>
<dbReference type="STRING" id="167546.P9301_16501"/>
<dbReference type="KEGG" id="pmg:P9301_16501"/>
<dbReference type="eggNOG" id="COG1333">
    <property type="taxonomic scope" value="Bacteria"/>
</dbReference>
<dbReference type="HOGENOM" id="CLU_034630_0_0_3"/>
<dbReference type="OrthoDB" id="9770923at2"/>
<dbReference type="Proteomes" id="UP000001430">
    <property type="component" value="Chromosome"/>
</dbReference>
<dbReference type="GO" id="GO:0031676">
    <property type="term" value="C:plasma membrane-derived thylakoid membrane"/>
    <property type="evidence" value="ECO:0007669"/>
    <property type="project" value="UniProtKB-SubCell"/>
</dbReference>
<dbReference type="GO" id="GO:0017004">
    <property type="term" value="P:cytochrome complex assembly"/>
    <property type="evidence" value="ECO:0007669"/>
    <property type="project" value="UniProtKB-UniRule"/>
</dbReference>
<dbReference type="HAMAP" id="MF_01392">
    <property type="entry name" value="CytC_Ccs1"/>
    <property type="match status" value="1"/>
</dbReference>
<dbReference type="InterPro" id="IPR023494">
    <property type="entry name" value="Cyt_c_bgen_Ccs1/CcsB/ResB"/>
</dbReference>
<dbReference type="InterPro" id="IPR007816">
    <property type="entry name" value="ResB-like_domain"/>
</dbReference>
<dbReference type="PANTHER" id="PTHR31566">
    <property type="entry name" value="CYTOCHROME C BIOGENESIS PROTEIN CCS1, CHLOROPLASTIC"/>
    <property type="match status" value="1"/>
</dbReference>
<dbReference type="PANTHER" id="PTHR31566:SF0">
    <property type="entry name" value="CYTOCHROME C BIOGENESIS PROTEIN CCS1, CHLOROPLASTIC"/>
    <property type="match status" value="1"/>
</dbReference>
<dbReference type="Pfam" id="PF05140">
    <property type="entry name" value="ResB"/>
    <property type="match status" value="2"/>
</dbReference>
<protein>
    <recommendedName>
        <fullName evidence="1">Cytochrome c biogenesis protein CcsB</fullName>
    </recommendedName>
</protein>
<sequence length="428" mass="48372">MTIVKDLIFRISSLKFAISLIIFIAISSGVGTFIPQGSNSKFYIENFDEAPIFGFLNGEKVLILQLDHIYTSLWFLFALILLCISLAACSFRRQIPSLKASLKWIEYKSEKKFRKLQLNSSYQINEVEDLISKADLFLKKRGWKTYKFKSHISARKGLIGKIGPLVVHIGLIVLLIGSAYGSFTSQSKEQYLLPGESLDLINESTNSKANIKLVDFSIERESDGIPKQFISKLDFTSEDSKFNEVKTAKVNHPIRFKGLTIYQADWAISNIVLEIDNILYQLQLKEIPEIGNQVWGILIELGSETKKNFLLTIDNENGPLKISNTENFSGNNLYINENPLEVNSSKVSLKKIIPSSGLIIKNDPSIPFIYFSFILIIFGTIISLIPTNQLWILVNQESQSLSIGGLSNKNLVGFKKEFFKLSEEIKNF</sequence>
<reference key="1">
    <citation type="journal article" date="2007" name="PLoS Genet.">
        <title>Patterns and implications of gene gain and loss in the evolution of Prochlorococcus.</title>
        <authorList>
            <person name="Kettler G.C."/>
            <person name="Martiny A.C."/>
            <person name="Huang K."/>
            <person name="Zucker J."/>
            <person name="Coleman M.L."/>
            <person name="Rodrigue S."/>
            <person name="Chen F."/>
            <person name="Lapidus A."/>
            <person name="Ferriera S."/>
            <person name="Johnson J."/>
            <person name="Steglich C."/>
            <person name="Church G.M."/>
            <person name="Richardson P."/>
            <person name="Chisholm S.W."/>
        </authorList>
    </citation>
    <scope>NUCLEOTIDE SEQUENCE [LARGE SCALE GENOMIC DNA]</scope>
    <source>
        <strain>MIT 9301</strain>
    </source>
</reference>
<gene>
    <name evidence="1" type="primary">ccsB</name>
    <name evidence="1" type="synonym">ccs1</name>
    <name type="ordered locus">P9301_16501</name>
</gene>
<keyword id="KW-0201">Cytochrome c-type biogenesis</keyword>
<keyword id="KW-0472">Membrane</keyword>
<keyword id="KW-1185">Reference proteome</keyword>
<keyword id="KW-0793">Thylakoid</keyword>
<keyword id="KW-0812">Transmembrane</keyword>
<keyword id="KW-1133">Transmembrane helix</keyword>
<comment type="function">
    <text evidence="1">Required during biogenesis of c-type cytochromes (cytochrome c6 and cytochrome f) at the step of heme attachment.</text>
</comment>
<comment type="subunit">
    <text evidence="1">May interact with CcsA.</text>
</comment>
<comment type="subcellular location">
    <subcellularLocation>
        <location evidence="1">Cellular thylakoid membrane</location>
        <topology evidence="1">Multi-pass membrane protein</topology>
    </subcellularLocation>
</comment>
<comment type="similarity">
    <text evidence="1">Belongs to the Ccs1/CcsB family.</text>
</comment>
<evidence type="ECO:0000255" key="1">
    <source>
        <dbReference type="HAMAP-Rule" id="MF_01392"/>
    </source>
</evidence>
<proteinExistence type="inferred from homology"/>